<accession>Q65GT3</accession>
<accession>Q62S92</accession>
<organism>
    <name type="scientific">Bacillus licheniformis (strain ATCC 14580 / DSM 13 / JCM 2505 / CCUG 7422 / NBRC 12200 / NCIMB 9375 / NCTC 10341 / NRRL NRS-1264 / Gibson 46)</name>
    <dbReference type="NCBI Taxonomy" id="279010"/>
    <lineage>
        <taxon>Bacteria</taxon>
        <taxon>Bacillati</taxon>
        <taxon>Bacillota</taxon>
        <taxon>Bacilli</taxon>
        <taxon>Bacillales</taxon>
        <taxon>Bacillaceae</taxon>
        <taxon>Bacillus</taxon>
    </lineage>
</organism>
<name>URK_BACLD</name>
<gene>
    <name evidence="1" type="primary">udk</name>
    <name type="ordered locus">BLi02861</name>
    <name type="ordered locus">BL02025</name>
</gene>
<feature type="chain" id="PRO_1000017867" description="Uridine kinase">
    <location>
        <begin position="1"/>
        <end position="211"/>
    </location>
</feature>
<feature type="binding site" evidence="1">
    <location>
        <begin position="12"/>
        <end position="19"/>
    </location>
    <ligand>
        <name>ATP</name>
        <dbReference type="ChEBI" id="CHEBI:30616"/>
    </ligand>
</feature>
<keyword id="KW-0067">ATP-binding</keyword>
<keyword id="KW-0963">Cytoplasm</keyword>
<keyword id="KW-0418">Kinase</keyword>
<keyword id="KW-0547">Nucleotide-binding</keyword>
<keyword id="KW-1185">Reference proteome</keyword>
<keyword id="KW-0808">Transferase</keyword>
<dbReference type="EC" id="2.7.1.48" evidence="1"/>
<dbReference type="EMBL" id="CP000002">
    <property type="protein sequence ID" value="AAU24367.1"/>
    <property type="molecule type" value="Genomic_DNA"/>
</dbReference>
<dbReference type="EMBL" id="AE017333">
    <property type="protein sequence ID" value="AAU41731.1"/>
    <property type="molecule type" value="Genomic_DNA"/>
</dbReference>
<dbReference type="RefSeq" id="WP_003183905.1">
    <property type="nucleotide sequence ID" value="NC_006322.1"/>
</dbReference>
<dbReference type="SMR" id="Q65GT3"/>
<dbReference type="STRING" id="279010.BL02025"/>
<dbReference type="GeneID" id="92860545"/>
<dbReference type="KEGG" id="bld:BLi02861"/>
<dbReference type="KEGG" id="bli:BL02025"/>
<dbReference type="eggNOG" id="COG0572">
    <property type="taxonomic scope" value="Bacteria"/>
</dbReference>
<dbReference type="HOGENOM" id="CLU_021278_1_2_9"/>
<dbReference type="UniPathway" id="UPA00574">
    <property type="reaction ID" value="UER00637"/>
</dbReference>
<dbReference type="UniPathway" id="UPA00579">
    <property type="reaction ID" value="UER00640"/>
</dbReference>
<dbReference type="Proteomes" id="UP000000606">
    <property type="component" value="Chromosome"/>
</dbReference>
<dbReference type="GO" id="GO:0005737">
    <property type="term" value="C:cytoplasm"/>
    <property type="evidence" value="ECO:0007669"/>
    <property type="project" value="UniProtKB-SubCell"/>
</dbReference>
<dbReference type="GO" id="GO:0005524">
    <property type="term" value="F:ATP binding"/>
    <property type="evidence" value="ECO:0007669"/>
    <property type="project" value="UniProtKB-UniRule"/>
</dbReference>
<dbReference type="GO" id="GO:0043771">
    <property type="term" value="F:cytidine kinase activity"/>
    <property type="evidence" value="ECO:0007669"/>
    <property type="project" value="RHEA"/>
</dbReference>
<dbReference type="GO" id="GO:0004849">
    <property type="term" value="F:uridine kinase activity"/>
    <property type="evidence" value="ECO:0007669"/>
    <property type="project" value="UniProtKB-UniRule"/>
</dbReference>
<dbReference type="GO" id="GO:0044211">
    <property type="term" value="P:CTP salvage"/>
    <property type="evidence" value="ECO:0007669"/>
    <property type="project" value="UniProtKB-UniRule"/>
</dbReference>
<dbReference type="GO" id="GO:0044206">
    <property type="term" value="P:UMP salvage"/>
    <property type="evidence" value="ECO:0007669"/>
    <property type="project" value="UniProtKB-UniRule"/>
</dbReference>
<dbReference type="CDD" id="cd02023">
    <property type="entry name" value="UMPK"/>
    <property type="match status" value="1"/>
</dbReference>
<dbReference type="Gene3D" id="3.40.50.300">
    <property type="entry name" value="P-loop containing nucleotide triphosphate hydrolases"/>
    <property type="match status" value="1"/>
</dbReference>
<dbReference type="HAMAP" id="MF_00551">
    <property type="entry name" value="Uridine_kinase"/>
    <property type="match status" value="1"/>
</dbReference>
<dbReference type="InterPro" id="IPR027417">
    <property type="entry name" value="P-loop_NTPase"/>
</dbReference>
<dbReference type="InterPro" id="IPR006083">
    <property type="entry name" value="PRK/URK"/>
</dbReference>
<dbReference type="InterPro" id="IPR026008">
    <property type="entry name" value="Uridine_kinase"/>
</dbReference>
<dbReference type="InterPro" id="IPR000764">
    <property type="entry name" value="Uridine_kinase-like"/>
</dbReference>
<dbReference type="NCBIfam" id="NF004018">
    <property type="entry name" value="PRK05480.1"/>
    <property type="match status" value="1"/>
</dbReference>
<dbReference type="NCBIfam" id="TIGR00235">
    <property type="entry name" value="udk"/>
    <property type="match status" value="1"/>
</dbReference>
<dbReference type="PANTHER" id="PTHR10285">
    <property type="entry name" value="URIDINE KINASE"/>
    <property type="match status" value="1"/>
</dbReference>
<dbReference type="Pfam" id="PF00485">
    <property type="entry name" value="PRK"/>
    <property type="match status" value="1"/>
</dbReference>
<dbReference type="PRINTS" id="PR00988">
    <property type="entry name" value="URIDINKINASE"/>
</dbReference>
<dbReference type="SUPFAM" id="SSF52540">
    <property type="entry name" value="P-loop containing nucleoside triphosphate hydrolases"/>
    <property type="match status" value="1"/>
</dbReference>
<sequence>MGKKPVVIGIAGGSGSGKTSVTRSIYEQFKGHSILMLEQDLYYKDQSHLPFEERLNTNYDHPLAFDNDYLIEHLNELLAYRPIKKPIYDYKLHTRSEEVVHVDPKDVIILEGILVLEDERLRDLMDIKLYVDTDADLRIIRRMLRDIKERGRSIDSVIEQYISVVRPMHNQFVEPTKRYADIIIPEGGQNRVAIDLMVTKIQTILEQNAIL</sequence>
<reference key="1">
    <citation type="journal article" date="2004" name="J. Mol. Microbiol. Biotechnol.">
        <title>The complete genome sequence of Bacillus licheniformis DSM13, an organism with great industrial potential.</title>
        <authorList>
            <person name="Veith B."/>
            <person name="Herzberg C."/>
            <person name="Steckel S."/>
            <person name="Feesche J."/>
            <person name="Maurer K.H."/>
            <person name="Ehrenreich P."/>
            <person name="Baeumer S."/>
            <person name="Henne A."/>
            <person name="Liesegang H."/>
            <person name="Merkl R."/>
            <person name="Ehrenreich A."/>
            <person name="Gottschalk G."/>
        </authorList>
    </citation>
    <scope>NUCLEOTIDE SEQUENCE [LARGE SCALE GENOMIC DNA]</scope>
    <source>
        <strain>ATCC 14580 / DSM 13 / JCM 2505 / CCUG 7422 / NBRC 12200 / NCIMB 9375 / NCTC 10341 / NRRL NRS-1264 / Gibson 46</strain>
    </source>
</reference>
<reference key="2">
    <citation type="journal article" date="2004" name="Genome Biol.">
        <title>Complete genome sequence of the industrial bacterium Bacillus licheniformis and comparisons with closely related Bacillus species.</title>
        <authorList>
            <person name="Rey M.W."/>
            <person name="Ramaiya P."/>
            <person name="Nelson B.A."/>
            <person name="Brody-Karpin S.D."/>
            <person name="Zaretsky E.J."/>
            <person name="Tang M."/>
            <person name="Lopez de Leon A."/>
            <person name="Xiang H."/>
            <person name="Gusti V."/>
            <person name="Clausen I.G."/>
            <person name="Olsen P.B."/>
            <person name="Rasmussen M.D."/>
            <person name="Andersen J.T."/>
            <person name="Joergensen P.L."/>
            <person name="Larsen T.S."/>
            <person name="Sorokin A."/>
            <person name="Bolotin A."/>
            <person name="Lapidus A."/>
            <person name="Galleron N."/>
            <person name="Ehrlich S.D."/>
            <person name="Berka R.M."/>
        </authorList>
    </citation>
    <scope>NUCLEOTIDE SEQUENCE [LARGE SCALE GENOMIC DNA]</scope>
    <source>
        <strain>ATCC 14580 / DSM 13 / JCM 2505 / CCUG 7422 / NBRC 12200 / NCIMB 9375 / NCTC 10341 / NRRL NRS-1264 / Gibson 46</strain>
    </source>
</reference>
<evidence type="ECO:0000255" key="1">
    <source>
        <dbReference type="HAMAP-Rule" id="MF_00551"/>
    </source>
</evidence>
<proteinExistence type="inferred from homology"/>
<comment type="catalytic activity">
    <reaction evidence="1">
        <text>uridine + ATP = UMP + ADP + H(+)</text>
        <dbReference type="Rhea" id="RHEA:16825"/>
        <dbReference type="ChEBI" id="CHEBI:15378"/>
        <dbReference type="ChEBI" id="CHEBI:16704"/>
        <dbReference type="ChEBI" id="CHEBI:30616"/>
        <dbReference type="ChEBI" id="CHEBI:57865"/>
        <dbReference type="ChEBI" id="CHEBI:456216"/>
        <dbReference type="EC" id="2.7.1.48"/>
    </reaction>
</comment>
<comment type="catalytic activity">
    <reaction evidence="1">
        <text>cytidine + ATP = CMP + ADP + H(+)</text>
        <dbReference type="Rhea" id="RHEA:24674"/>
        <dbReference type="ChEBI" id="CHEBI:15378"/>
        <dbReference type="ChEBI" id="CHEBI:17562"/>
        <dbReference type="ChEBI" id="CHEBI:30616"/>
        <dbReference type="ChEBI" id="CHEBI:60377"/>
        <dbReference type="ChEBI" id="CHEBI:456216"/>
        <dbReference type="EC" id="2.7.1.48"/>
    </reaction>
</comment>
<comment type="pathway">
    <text evidence="1">Pyrimidine metabolism; CTP biosynthesis via salvage pathway; CTP from cytidine: step 1/3.</text>
</comment>
<comment type="pathway">
    <text evidence="1">Pyrimidine metabolism; UMP biosynthesis via salvage pathway; UMP from uridine: step 1/1.</text>
</comment>
<comment type="subcellular location">
    <subcellularLocation>
        <location evidence="1">Cytoplasm</location>
    </subcellularLocation>
</comment>
<comment type="similarity">
    <text evidence="1">Belongs to the uridine kinase family.</text>
</comment>
<protein>
    <recommendedName>
        <fullName evidence="1">Uridine kinase</fullName>
        <ecNumber evidence="1">2.7.1.48</ecNumber>
    </recommendedName>
    <alternativeName>
        <fullName evidence="1">Cytidine monophosphokinase</fullName>
    </alternativeName>
    <alternativeName>
        <fullName evidence="1">Uridine monophosphokinase</fullName>
    </alternativeName>
</protein>